<organism>
    <name type="scientific">Brucella canis (strain ATCC 23365 / NCTC 10854 / RM-666)</name>
    <dbReference type="NCBI Taxonomy" id="483179"/>
    <lineage>
        <taxon>Bacteria</taxon>
        <taxon>Pseudomonadati</taxon>
        <taxon>Pseudomonadota</taxon>
        <taxon>Alphaproteobacteria</taxon>
        <taxon>Hyphomicrobiales</taxon>
        <taxon>Brucellaceae</taxon>
        <taxon>Brucella/Ochrobactrum group</taxon>
        <taxon>Brucella</taxon>
    </lineage>
</organism>
<reference key="1">
    <citation type="submission" date="2007-10" db="EMBL/GenBank/DDBJ databases">
        <title>Brucella canis ATCC 23365 whole genome shotgun sequencing project.</title>
        <authorList>
            <person name="Setubal J.C."/>
            <person name="Bowns C."/>
            <person name="Boyle S."/>
            <person name="Crasta O.R."/>
            <person name="Czar M.J."/>
            <person name="Dharmanolla C."/>
            <person name="Gillespie J.J."/>
            <person name="Kenyon R.W."/>
            <person name="Lu J."/>
            <person name="Mane S."/>
            <person name="Mohapatra S."/>
            <person name="Nagrani S."/>
            <person name="Purkayastha A."/>
            <person name="Rajasimha H.K."/>
            <person name="Shallom J.M."/>
            <person name="Shallom S."/>
            <person name="Shukla M."/>
            <person name="Snyder E.E."/>
            <person name="Sobral B.W."/>
            <person name="Wattam A.R."/>
            <person name="Will R."/>
            <person name="Williams K."/>
            <person name="Yoo H."/>
            <person name="Bruce D."/>
            <person name="Detter C."/>
            <person name="Munk C."/>
            <person name="Brettin T.S."/>
        </authorList>
    </citation>
    <scope>NUCLEOTIDE SEQUENCE [LARGE SCALE GENOMIC DNA]</scope>
    <source>
        <strain>ATCC 23365 / NCTC 10854 / RM-666</strain>
    </source>
</reference>
<dbReference type="EC" id="6.1.1.15" evidence="1"/>
<dbReference type="EMBL" id="CP000872">
    <property type="protein sequence ID" value="ABX61902.1"/>
    <property type="molecule type" value="Genomic_DNA"/>
</dbReference>
<dbReference type="RefSeq" id="WP_004690762.1">
    <property type="nucleotide sequence ID" value="NC_010103.1"/>
</dbReference>
<dbReference type="SMR" id="A9MAJ9"/>
<dbReference type="GeneID" id="55590532"/>
<dbReference type="KEGG" id="bcs:BCAN_A0837"/>
<dbReference type="HOGENOM" id="CLU_016739_4_2_5"/>
<dbReference type="PhylomeDB" id="A9MAJ9"/>
<dbReference type="Proteomes" id="UP000001385">
    <property type="component" value="Chromosome I"/>
</dbReference>
<dbReference type="GO" id="GO:0005829">
    <property type="term" value="C:cytosol"/>
    <property type="evidence" value="ECO:0007669"/>
    <property type="project" value="TreeGrafter"/>
</dbReference>
<dbReference type="GO" id="GO:0005524">
    <property type="term" value="F:ATP binding"/>
    <property type="evidence" value="ECO:0007669"/>
    <property type="project" value="UniProtKB-UniRule"/>
</dbReference>
<dbReference type="GO" id="GO:0004827">
    <property type="term" value="F:proline-tRNA ligase activity"/>
    <property type="evidence" value="ECO:0007669"/>
    <property type="project" value="UniProtKB-UniRule"/>
</dbReference>
<dbReference type="GO" id="GO:0006433">
    <property type="term" value="P:prolyl-tRNA aminoacylation"/>
    <property type="evidence" value="ECO:0007669"/>
    <property type="project" value="UniProtKB-UniRule"/>
</dbReference>
<dbReference type="CDD" id="cd00861">
    <property type="entry name" value="ProRS_anticodon_short"/>
    <property type="match status" value="1"/>
</dbReference>
<dbReference type="CDD" id="cd00779">
    <property type="entry name" value="ProRS_core_prok"/>
    <property type="match status" value="1"/>
</dbReference>
<dbReference type="FunFam" id="3.30.930.10:FF:000042">
    <property type="entry name" value="probable proline--tRNA ligase, mitochondrial"/>
    <property type="match status" value="1"/>
</dbReference>
<dbReference type="FunFam" id="3.40.50.800:FF:000032">
    <property type="entry name" value="Proline--tRNA ligase"/>
    <property type="match status" value="1"/>
</dbReference>
<dbReference type="Gene3D" id="3.40.50.800">
    <property type="entry name" value="Anticodon-binding domain"/>
    <property type="match status" value="1"/>
</dbReference>
<dbReference type="Gene3D" id="3.30.930.10">
    <property type="entry name" value="Bira Bifunctional Protein, Domain 2"/>
    <property type="match status" value="1"/>
</dbReference>
<dbReference type="HAMAP" id="MF_01570">
    <property type="entry name" value="Pro_tRNA_synth_type2"/>
    <property type="match status" value="1"/>
</dbReference>
<dbReference type="InterPro" id="IPR002314">
    <property type="entry name" value="aa-tRNA-synt_IIb"/>
</dbReference>
<dbReference type="InterPro" id="IPR006195">
    <property type="entry name" value="aa-tRNA-synth_II"/>
</dbReference>
<dbReference type="InterPro" id="IPR045864">
    <property type="entry name" value="aa-tRNA-synth_II/BPL/LPL"/>
</dbReference>
<dbReference type="InterPro" id="IPR004154">
    <property type="entry name" value="Anticodon-bd"/>
</dbReference>
<dbReference type="InterPro" id="IPR036621">
    <property type="entry name" value="Anticodon-bd_dom_sf"/>
</dbReference>
<dbReference type="InterPro" id="IPR002316">
    <property type="entry name" value="Pro-tRNA-ligase_IIa"/>
</dbReference>
<dbReference type="InterPro" id="IPR004500">
    <property type="entry name" value="Pro-tRNA-synth_IIa_bac-type"/>
</dbReference>
<dbReference type="InterPro" id="IPR050062">
    <property type="entry name" value="Pro-tRNA_synthetase"/>
</dbReference>
<dbReference type="InterPro" id="IPR023716">
    <property type="entry name" value="Prolyl-tRNA_ligase_IIa_type2"/>
</dbReference>
<dbReference type="InterPro" id="IPR044140">
    <property type="entry name" value="ProRS_anticodon_short"/>
</dbReference>
<dbReference type="InterPro" id="IPR033730">
    <property type="entry name" value="ProRS_core_prok"/>
</dbReference>
<dbReference type="NCBIfam" id="NF008979">
    <property type="entry name" value="PRK12325.1"/>
    <property type="match status" value="1"/>
</dbReference>
<dbReference type="NCBIfam" id="TIGR00409">
    <property type="entry name" value="proS_fam_II"/>
    <property type="match status" value="1"/>
</dbReference>
<dbReference type="PANTHER" id="PTHR42753">
    <property type="entry name" value="MITOCHONDRIAL RIBOSOME PROTEIN L39/PROLYL-TRNA LIGASE FAMILY MEMBER"/>
    <property type="match status" value="1"/>
</dbReference>
<dbReference type="PANTHER" id="PTHR42753:SF2">
    <property type="entry name" value="PROLINE--TRNA LIGASE"/>
    <property type="match status" value="1"/>
</dbReference>
<dbReference type="Pfam" id="PF03129">
    <property type="entry name" value="HGTP_anticodon"/>
    <property type="match status" value="1"/>
</dbReference>
<dbReference type="Pfam" id="PF00587">
    <property type="entry name" value="tRNA-synt_2b"/>
    <property type="match status" value="1"/>
</dbReference>
<dbReference type="PRINTS" id="PR01046">
    <property type="entry name" value="TRNASYNTHPRO"/>
</dbReference>
<dbReference type="SUPFAM" id="SSF52954">
    <property type="entry name" value="Class II aaRS ABD-related"/>
    <property type="match status" value="1"/>
</dbReference>
<dbReference type="SUPFAM" id="SSF55681">
    <property type="entry name" value="Class II aaRS and biotin synthetases"/>
    <property type="match status" value="1"/>
</dbReference>
<dbReference type="PROSITE" id="PS50862">
    <property type="entry name" value="AA_TRNA_LIGASE_II"/>
    <property type="match status" value="1"/>
</dbReference>
<keyword id="KW-0030">Aminoacyl-tRNA synthetase</keyword>
<keyword id="KW-0067">ATP-binding</keyword>
<keyword id="KW-0963">Cytoplasm</keyword>
<keyword id="KW-0436">Ligase</keyword>
<keyword id="KW-0547">Nucleotide-binding</keyword>
<keyword id="KW-0648">Protein biosynthesis</keyword>
<keyword id="KW-1185">Reference proteome</keyword>
<protein>
    <recommendedName>
        <fullName evidence="1">Proline--tRNA ligase</fullName>
        <ecNumber evidence="1">6.1.1.15</ecNumber>
    </recommendedName>
    <alternativeName>
        <fullName evidence="1">Prolyl-tRNA synthetase</fullName>
        <shortName evidence="1">ProRS</shortName>
    </alternativeName>
</protein>
<comment type="function">
    <text evidence="1">Catalyzes the attachment of proline to tRNA(Pro) in a two-step reaction: proline is first activated by ATP to form Pro-AMP and then transferred to the acceptor end of tRNA(Pro).</text>
</comment>
<comment type="catalytic activity">
    <reaction evidence="1">
        <text>tRNA(Pro) + L-proline + ATP = L-prolyl-tRNA(Pro) + AMP + diphosphate</text>
        <dbReference type="Rhea" id="RHEA:14305"/>
        <dbReference type="Rhea" id="RHEA-COMP:9700"/>
        <dbReference type="Rhea" id="RHEA-COMP:9702"/>
        <dbReference type="ChEBI" id="CHEBI:30616"/>
        <dbReference type="ChEBI" id="CHEBI:33019"/>
        <dbReference type="ChEBI" id="CHEBI:60039"/>
        <dbReference type="ChEBI" id="CHEBI:78442"/>
        <dbReference type="ChEBI" id="CHEBI:78532"/>
        <dbReference type="ChEBI" id="CHEBI:456215"/>
        <dbReference type="EC" id="6.1.1.15"/>
    </reaction>
</comment>
<comment type="subunit">
    <text evidence="1">Homodimer.</text>
</comment>
<comment type="subcellular location">
    <subcellularLocation>
        <location evidence="1">Cytoplasm</location>
    </subcellularLocation>
</comment>
<comment type="similarity">
    <text evidence="1">Belongs to the class-II aminoacyl-tRNA synthetase family. ProS type 2 subfamily.</text>
</comment>
<gene>
    <name evidence="1" type="primary">proS</name>
    <name type="ordered locus">BCAN_A0837</name>
</gene>
<proteinExistence type="inferred from homology"/>
<name>SYP_BRUC2</name>
<sequence length="442" mass="49508">MRLSRYFLPILKENPKEAEIVSHRLMLRSGMIRQQSAGIYSWLPIGLKVLNKVCTIIREEQNRAGANEILMPTIQSADLWRESGRYDAYGKEMLRIQDRQEREMLFGPTNEEMVTDIFRSYVRSYKDLPLNLYHIQWKFRDEVRPRFGVMRSREFLMKDAYSFDLDYEGAKMAYYRMFVSYLRTFARVGLQAIPMRADTGPIGGDLSHEFIILAETGESQVYCDRAYLDLAVPGADTDFRNDAQLTDIVTRWTTPYAATDEMHDEADWAKVKPESQVSARGIEVGHIFHFGTKYSEPMGAKVQGPDGKEHLVSMGSYGIGPSRLVAAAIEASHDDAGIIWPKAIAPFGAGIVNMKPGDEGCDGVSEKLYEALTNAGVDPLLDDKDERPGAKFATMDLIGLPTQVIVGPRGVAAGEVEVKDRKMGERQSLGIEAAINMLTAQA</sequence>
<feature type="chain" id="PRO_1000087861" description="Proline--tRNA ligase">
    <location>
        <begin position="1"/>
        <end position="442"/>
    </location>
</feature>
<accession>A9MAJ9</accession>
<evidence type="ECO:0000255" key="1">
    <source>
        <dbReference type="HAMAP-Rule" id="MF_01570"/>
    </source>
</evidence>